<accession>P32909</accession>
<accession>D6VQG8</accession>
<organism>
    <name type="scientific">Saccharomyces cerevisiae (strain ATCC 204508 / S288c)</name>
    <name type="common">Baker's yeast</name>
    <dbReference type="NCBI Taxonomy" id="559292"/>
    <lineage>
        <taxon>Eukaryota</taxon>
        <taxon>Fungi</taxon>
        <taxon>Dikarya</taxon>
        <taxon>Ascomycota</taxon>
        <taxon>Saccharomycotina</taxon>
        <taxon>Saccharomycetes</taxon>
        <taxon>Saccharomycetales</taxon>
        <taxon>Saccharomycetaceae</taxon>
        <taxon>Saccharomyces</taxon>
    </lineage>
</organism>
<evidence type="ECO:0000255" key="1"/>
<evidence type="ECO:0000255" key="2">
    <source>
        <dbReference type="PROSITE-ProRule" id="PRU00101"/>
    </source>
</evidence>
<evidence type="ECO:0000256" key="3">
    <source>
        <dbReference type="SAM" id="MobiDB-lite"/>
    </source>
</evidence>
<evidence type="ECO:0000269" key="4">
    <source>
    </source>
</evidence>
<evidence type="ECO:0000269" key="5">
    <source>
    </source>
</evidence>
<evidence type="ECO:0000269" key="6">
    <source>
    </source>
</evidence>
<evidence type="ECO:0000305" key="7"/>
<evidence type="ECO:0007744" key="8">
    <source>
    </source>
</evidence>
<evidence type="ECO:0007744" key="9">
    <source>
    </source>
</evidence>
<evidence type="ECO:0007744" key="10">
    <source>
    </source>
</evidence>
<evidence type="ECO:0007829" key="11">
    <source>
        <dbReference type="PDB" id="3K3V"/>
    </source>
</evidence>
<feature type="chain" id="PRO_0000071996" description="Protein SMY2">
    <location>
        <begin position="1"/>
        <end position="740"/>
    </location>
</feature>
<feature type="domain" description="GYF" evidence="2">
    <location>
        <begin position="205"/>
        <end position="261"/>
    </location>
</feature>
<feature type="region of interest" description="Disordered" evidence="3">
    <location>
        <begin position="346"/>
        <end position="510"/>
    </location>
</feature>
<feature type="region of interest" description="Disordered" evidence="3">
    <location>
        <begin position="523"/>
        <end position="548"/>
    </location>
</feature>
<feature type="region of interest" description="Disordered" evidence="3">
    <location>
        <begin position="567"/>
        <end position="592"/>
    </location>
</feature>
<feature type="coiled-coil region" evidence="1">
    <location>
        <begin position="369"/>
        <end position="440"/>
    </location>
</feature>
<feature type="compositionally biased region" description="Basic and acidic residues" evidence="3">
    <location>
        <begin position="364"/>
        <end position="439"/>
    </location>
</feature>
<feature type="compositionally biased region" description="Low complexity" evidence="3">
    <location>
        <begin position="452"/>
        <end position="467"/>
    </location>
</feature>
<feature type="compositionally biased region" description="Polar residues" evidence="3">
    <location>
        <begin position="474"/>
        <end position="486"/>
    </location>
</feature>
<feature type="compositionally biased region" description="Basic and acidic residues" evidence="3">
    <location>
        <begin position="500"/>
        <end position="510"/>
    </location>
</feature>
<feature type="compositionally biased region" description="Polar residues" evidence="3">
    <location>
        <begin position="523"/>
        <end position="536"/>
    </location>
</feature>
<feature type="modified residue" description="Phosphoserine" evidence="10">
    <location>
        <position position="12"/>
    </location>
</feature>
<feature type="modified residue" description="Phosphoserine" evidence="9">
    <location>
        <position position="96"/>
    </location>
</feature>
<feature type="modified residue" description="Phosphothreonine" evidence="8">
    <location>
        <position position="129"/>
    </location>
</feature>
<feature type="modified residue" description="Phosphothreonine" evidence="10">
    <location>
        <position position="311"/>
    </location>
</feature>
<feature type="modified residue" description="Phosphoserine" evidence="10">
    <location>
        <position position="545"/>
    </location>
</feature>
<feature type="modified residue" description="Phosphoserine" evidence="8 9 10">
    <location>
        <position position="602"/>
    </location>
</feature>
<feature type="strand" evidence="11">
    <location>
        <begin position="207"/>
        <end position="211"/>
    </location>
</feature>
<feature type="strand" evidence="11">
    <location>
        <begin position="217"/>
        <end position="222"/>
    </location>
</feature>
<feature type="helix" evidence="11">
    <location>
        <begin position="223"/>
        <end position="231"/>
    </location>
</feature>
<feature type="strand" evidence="11">
    <location>
        <begin position="240"/>
        <end position="243"/>
    </location>
</feature>
<feature type="strand" evidence="11">
    <location>
        <begin position="250"/>
        <end position="252"/>
    </location>
</feature>
<feature type="helix" evidence="11">
    <location>
        <begin position="260"/>
        <end position="268"/>
    </location>
</feature>
<feature type="helix" evidence="11">
    <location>
        <begin position="274"/>
        <end position="282"/>
    </location>
</feature>
<keyword id="KW-0002">3D-structure</keyword>
<keyword id="KW-0175">Coiled coil</keyword>
<keyword id="KW-0963">Cytoplasm</keyword>
<keyword id="KW-0597">Phosphoprotein</keyword>
<keyword id="KW-1185">Reference proteome</keyword>
<dbReference type="EMBL" id="M90654">
    <property type="protein sequence ID" value="AAA35057.1"/>
    <property type="status" value="ALT_INIT"/>
    <property type="molecule type" value="Genomic_DNA"/>
</dbReference>
<dbReference type="EMBL" id="Z36041">
    <property type="protein sequence ID" value="CAA85133.1"/>
    <property type="status" value="ALT_INIT"/>
    <property type="molecule type" value="Genomic_DNA"/>
</dbReference>
<dbReference type="EMBL" id="X74437">
    <property type="protein sequence ID" value="CAA52452.1"/>
    <property type="molecule type" value="Genomic_DNA"/>
</dbReference>
<dbReference type="EMBL" id="BK006936">
    <property type="protein sequence ID" value="DAA07288.1"/>
    <property type="molecule type" value="Genomic_DNA"/>
</dbReference>
<dbReference type="PIR" id="S27458">
    <property type="entry name" value="S27458"/>
</dbReference>
<dbReference type="RefSeq" id="NP_009731.4">
    <property type="nucleotide sequence ID" value="NM_001178520.3"/>
</dbReference>
<dbReference type="PDB" id="3FMA">
    <property type="method" value="X-ray"/>
    <property type="resolution" value="2.50 A"/>
    <property type="chains" value="A/B/C/D/E=193-290"/>
</dbReference>
<dbReference type="PDB" id="3K3V">
    <property type="method" value="X-ray"/>
    <property type="resolution" value="1.80 A"/>
    <property type="chains" value="A=193-290"/>
</dbReference>
<dbReference type="PDBsum" id="3FMA"/>
<dbReference type="PDBsum" id="3K3V"/>
<dbReference type="SMR" id="P32909"/>
<dbReference type="BioGRID" id="32872">
    <property type="interactions" value="631"/>
</dbReference>
<dbReference type="DIP" id="DIP-705N"/>
<dbReference type="FunCoup" id="P32909">
    <property type="interactions" value="64"/>
</dbReference>
<dbReference type="IntAct" id="P32909">
    <property type="interactions" value="22"/>
</dbReference>
<dbReference type="MINT" id="P32909"/>
<dbReference type="STRING" id="4932.YBR172C"/>
<dbReference type="GlyGen" id="P32909">
    <property type="glycosylation" value="5 sites, 1 O-linked glycan (5 sites)"/>
</dbReference>
<dbReference type="iPTMnet" id="P32909"/>
<dbReference type="PaxDb" id="4932-YBR172C"/>
<dbReference type="PeptideAtlas" id="P32909"/>
<dbReference type="EnsemblFungi" id="YBR172C_mRNA">
    <property type="protein sequence ID" value="YBR172C"/>
    <property type="gene ID" value="YBR172C"/>
</dbReference>
<dbReference type="GeneID" id="852470"/>
<dbReference type="KEGG" id="sce:YBR172C"/>
<dbReference type="AGR" id="SGD:S000000376"/>
<dbReference type="SGD" id="S000000376">
    <property type="gene designation" value="SMY2"/>
</dbReference>
<dbReference type="VEuPathDB" id="FungiDB:YBR172C"/>
<dbReference type="eggNOG" id="KOG1862">
    <property type="taxonomic scope" value="Eukaryota"/>
</dbReference>
<dbReference type="GeneTree" id="ENSGT00940000176785"/>
<dbReference type="HOGENOM" id="CLU_019270_0_0_1"/>
<dbReference type="InParanoid" id="P32909"/>
<dbReference type="OMA" id="TENNNTH"/>
<dbReference type="OrthoDB" id="48509at2759"/>
<dbReference type="BioCyc" id="YEAST:G3O-29120-MONOMER"/>
<dbReference type="BioGRID-ORCS" id="852470">
    <property type="hits" value="0 hits in 10 CRISPR screens"/>
</dbReference>
<dbReference type="CD-CODE" id="A777E0F8">
    <property type="entry name" value="P-body"/>
</dbReference>
<dbReference type="EvolutionaryTrace" id="P32909"/>
<dbReference type="PRO" id="PR:P32909"/>
<dbReference type="Proteomes" id="UP000002311">
    <property type="component" value="Chromosome II"/>
</dbReference>
<dbReference type="RNAct" id="P32909">
    <property type="molecule type" value="protein"/>
</dbReference>
<dbReference type="GO" id="GO:0005737">
    <property type="term" value="C:cytoplasm"/>
    <property type="evidence" value="ECO:0007005"/>
    <property type="project" value="SGD"/>
</dbReference>
<dbReference type="GO" id="GO:0005829">
    <property type="term" value="C:cytosol"/>
    <property type="evidence" value="ECO:0007005"/>
    <property type="project" value="SGD"/>
</dbReference>
<dbReference type="GO" id="GO:0005789">
    <property type="term" value="C:endoplasmic reticulum membrane"/>
    <property type="evidence" value="ECO:0000314"/>
    <property type="project" value="SGD"/>
</dbReference>
<dbReference type="GO" id="GO:0005634">
    <property type="term" value="C:nucleus"/>
    <property type="evidence" value="ECO:0000314"/>
    <property type="project" value="SGD"/>
</dbReference>
<dbReference type="GO" id="GO:0006888">
    <property type="term" value="P:endoplasmic reticulum to Golgi vesicle-mediated transport"/>
    <property type="evidence" value="ECO:0000316"/>
    <property type="project" value="SGD"/>
</dbReference>
<dbReference type="GO" id="GO:0071630">
    <property type="term" value="P:nuclear protein quality control by the ubiquitin-proteasome system"/>
    <property type="evidence" value="ECO:0000315"/>
    <property type="project" value="SGD"/>
</dbReference>
<dbReference type="GO" id="GO:0032984">
    <property type="term" value="P:protein-containing complex disassembly"/>
    <property type="evidence" value="ECO:0000315"/>
    <property type="project" value="SGD"/>
</dbReference>
<dbReference type="GO" id="GO:0006357">
    <property type="term" value="P:regulation of transcription by RNA polymerase II"/>
    <property type="evidence" value="ECO:0000315"/>
    <property type="project" value="SGD"/>
</dbReference>
<dbReference type="CDD" id="cd00072">
    <property type="entry name" value="GYF"/>
    <property type="match status" value="1"/>
</dbReference>
<dbReference type="Gene3D" id="3.30.1490.40">
    <property type="match status" value="1"/>
</dbReference>
<dbReference type="InterPro" id="IPR051640">
    <property type="entry name" value="GRB10-interact_GYF"/>
</dbReference>
<dbReference type="InterPro" id="IPR003169">
    <property type="entry name" value="GYF"/>
</dbReference>
<dbReference type="InterPro" id="IPR035445">
    <property type="entry name" value="GYF-like_dom_sf"/>
</dbReference>
<dbReference type="PANTHER" id="PTHR14445:SF36">
    <property type="entry name" value="FI03272P-RELATED"/>
    <property type="match status" value="1"/>
</dbReference>
<dbReference type="PANTHER" id="PTHR14445">
    <property type="entry name" value="GRB10 INTERACTING GYF PROTEIN"/>
    <property type="match status" value="1"/>
</dbReference>
<dbReference type="Pfam" id="PF02213">
    <property type="entry name" value="GYF"/>
    <property type="match status" value="1"/>
</dbReference>
<dbReference type="SMART" id="SM00444">
    <property type="entry name" value="GYF"/>
    <property type="match status" value="1"/>
</dbReference>
<dbReference type="SUPFAM" id="SSF55277">
    <property type="entry name" value="GYF domain"/>
    <property type="match status" value="1"/>
</dbReference>
<dbReference type="PROSITE" id="PS50829">
    <property type="entry name" value="GYF"/>
    <property type="match status" value="1"/>
</dbReference>
<reference key="1">
    <citation type="submission" date="1992-04" db="EMBL/GenBank/DDBJ databases">
        <title>Characterization of a suppressor of the MYO2 gene in yeast.</title>
        <authorList>
            <person name="Lillie S.H."/>
            <person name="Brown S.S."/>
        </authorList>
    </citation>
    <scope>NUCLEOTIDE SEQUENCE [GENOMIC DNA]</scope>
</reference>
<reference key="2">
    <citation type="journal article" date="1994" name="EMBO J.">
        <title>Complete DNA sequence of yeast chromosome II.</title>
        <authorList>
            <person name="Feldmann H."/>
            <person name="Aigle M."/>
            <person name="Aljinovic G."/>
            <person name="Andre B."/>
            <person name="Baclet M.C."/>
            <person name="Barthe C."/>
            <person name="Baur A."/>
            <person name="Becam A.-M."/>
            <person name="Biteau N."/>
            <person name="Boles E."/>
            <person name="Brandt T."/>
            <person name="Brendel M."/>
            <person name="Brueckner M."/>
            <person name="Bussereau F."/>
            <person name="Christiansen C."/>
            <person name="Contreras R."/>
            <person name="Crouzet M."/>
            <person name="Cziepluch C."/>
            <person name="Demolis N."/>
            <person name="Delaveau T."/>
            <person name="Doignon F."/>
            <person name="Domdey H."/>
            <person name="Duesterhus S."/>
            <person name="Dubois E."/>
            <person name="Dujon B."/>
            <person name="El Bakkoury M."/>
            <person name="Entian K.-D."/>
            <person name="Feuermann M."/>
            <person name="Fiers W."/>
            <person name="Fobo G.M."/>
            <person name="Fritz C."/>
            <person name="Gassenhuber J."/>
            <person name="Glansdorff N."/>
            <person name="Goffeau A."/>
            <person name="Grivell L.A."/>
            <person name="de Haan M."/>
            <person name="Hein C."/>
            <person name="Herbert C.J."/>
            <person name="Hollenberg C.P."/>
            <person name="Holmstroem K."/>
            <person name="Jacq C."/>
            <person name="Jacquet M."/>
            <person name="Jauniaux J.-C."/>
            <person name="Jonniaux J.-L."/>
            <person name="Kallesoee T."/>
            <person name="Kiesau P."/>
            <person name="Kirchrath L."/>
            <person name="Koetter P."/>
            <person name="Korol S."/>
            <person name="Liebl S."/>
            <person name="Logghe M."/>
            <person name="Lohan A.J.E."/>
            <person name="Louis E.J."/>
            <person name="Li Z.Y."/>
            <person name="Maat M.J."/>
            <person name="Mallet L."/>
            <person name="Mannhaupt G."/>
            <person name="Messenguy F."/>
            <person name="Miosga T."/>
            <person name="Molemans F."/>
            <person name="Mueller S."/>
            <person name="Nasr F."/>
            <person name="Obermaier B."/>
            <person name="Perea J."/>
            <person name="Pierard A."/>
            <person name="Piravandi E."/>
            <person name="Pohl F.M."/>
            <person name="Pohl T.M."/>
            <person name="Potier S."/>
            <person name="Proft M."/>
            <person name="Purnelle B."/>
            <person name="Ramezani Rad M."/>
            <person name="Rieger M."/>
            <person name="Rose M."/>
            <person name="Schaaff-Gerstenschlaeger I."/>
            <person name="Scherens B."/>
            <person name="Schwarzlose C."/>
            <person name="Skala J."/>
            <person name="Slonimski P.P."/>
            <person name="Smits P.H.M."/>
            <person name="Souciet J.-L."/>
            <person name="Steensma H.Y."/>
            <person name="Stucka R."/>
            <person name="Urrestarazu L.A."/>
            <person name="van der Aart Q.J.M."/>
            <person name="Van Dyck L."/>
            <person name="Vassarotti A."/>
            <person name="Vetter I."/>
            <person name="Vierendeels F."/>
            <person name="Vissers S."/>
            <person name="Wagner G."/>
            <person name="de Wergifosse P."/>
            <person name="Wolfe K.H."/>
            <person name="Zagulski M."/>
            <person name="Zimmermann F.K."/>
            <person name="Mewes H.-W."/>
            <person name="Kleine K."/>
        </authorList>
    </citation>
    <scope>NUCLEOTIDE SEQUENCE [LARGE SCALE GENOMIC DNA]</scope>
    <source>
        <strain>ATCC 204508 / S288c</strain>
    </source>
</reference>
<reference key="3">
    <citation type="journal article" date="2014" name="G3 (Bethesda)">
        <title>The reference genome sequence of Saccharomyces cerevisiae: Then and now.</title>
        <authorList>
            <person name="Engel S.R."/>
            <person name="Dietrich F.S."/>
            <person name="Fisk D.G."/>
            <person name="Binkley G."/>
            <person name="Balakrishnan R."/>
            <person name="Costanzo M.C."/>
            <person name="Dwight S.S."/>
            <person name="Hitz B.C."/>
            <person name="Karra K."/>
            <person name="Nash R.S."/>
            <person name="Weng S."/>
            <person name="Wong E.D."/>
            <person name="Lloyd P."/>
            <person name="Skrzypek M.S."/>
            <person name="Miyasato S.R."/>
            <person name="Simison M."/>
            <person name="Cherry J.M."/>
        </authorList>
    </citation>
    <scope>GENOME REANNOTATION</scope>
    <source>
        <strain>ATCC 204508 / S288c</strain>
    </source>
</reference>
<reference key="4">
    <citation type="journal article" date="1993" name="Yeast">
        <title>Sequence and function analysis of a 4.3 kb fragment of Saccharomyces cerevisiae chromosome II including three open reading frames.</title>
        <authorList>
            <person name="Schaaff-Gerstenschlaeger I."/>
            <person name="Bauer A."/>
            <person name="Boles E."/>
            <person name="Zimmermann F.K."/>
        </authorList>
    </citation>
    <scope>NUCLEOTIDE SEQUENCE [GENOMIC DNA] OF 273-740</scope>
    <source>
        <strain>ATCC 204508 / S288c</strain>
    </source>
</reference>
<reference key="5">
    <citation type="journal article" date="2003" name="Nature">
        <title>Sequencing and comparison of yeast species to identify genes and regulatory elements.</title>
        <authorList>
            <person name="Kellis M."/>
            <person name="Patterson N."/>
            <person name="Endrizzi M."/>
            <person name="Birren B.W."/>
            <person name="Lander E.S."/>
        </authorList>
    </citation>
    <scope>IDENTIFICATION OF PROBABLE INITIATION SITE</scope>
</reference>
<reference key="6">
    <citation type="journal article" date="2003" name="Nature">
        <title>Global analysis of protein localization in budding yeast.</title>
        <authorList>
            <person name="Huh W.-K."/>
            <person name="Falvo J.V."/>
            <person name="Gerke L.C."/>
            <person name="Carroll A.S."/>
            <person name="Howson R.W."/>
            <person name="Weissman J.S."/>
            <person name="O'Shea E.K."/>
        </authorList>
    </citation>
    <scope>SUBCELLULAR LOCATION [LARGE SCALE ANALYSIS]</scope>
</reference>
<reference key="7">
    <citation type="journal article" date="2003" name="Nature">
        <title>Global analysis of protein expression in yeast.</title>
        <authorList>
            <person name="Ghaemmaghami S."/>
            <person name="Huh W.-K."/>
            <person name="Bower K."/>
            <person name="Howson R.W."/>
            <person name="Belle A."/>
            <person name="Dephoure N."/>
            <person name="O'Shea E.K."/>
            <person name="Weissman J.S."/>
        </authorList>
    </citation>
    <scope>LEVEL OF PROTEIN EXPRESSION [LARGE SCALE ANALYSIS]</scope>
</reference>
<reference key="8">
    <citation type="journal article" date="2005" name="Mol. Cell. Proteomics">
        <title>GYF domain proteomics reveals interaction sites in known and novel target proteins.</title>
        <authorList>
            <person name="Kofler M."/>
            <person name="Motzny K."/>
            <person name="Freund C."/>
        </authorList>
    </citation>
    <scope>INTERACTION WITH EAP1 AND MSL5</scope>
</reference>
<reference key="9">
    <citation type="journal article" date="2005" name="Mol. Cell. Proteomics">
        <title>Quantitative phosphoproteomics applied to the yeast pheromone signaling pathway.</title>
        <authorList>
            <person name="Gruhler A."/>
            <person name="Olsen J.V."/>
            <person name="Mohammed S."/>
            <person name="Mortensen P."/>
            <person name="Faergeman N.J."/>
            <person name="Mann M."/>
            <person name="Jensen O.N."/>
        </authorList>
    </citation>
    <scope>IDENTIFICATION BY MASS SPECTROMETRY [LARGE SCALE ANALYSIS]</scope>
    <source>
        <strain>YAL6B</strain>
    </source>
</reference>
<reference key="10">
    <citation type="journal article" date="2007" name="J. Proteome Res.">
        <title>Large-scale phosphorylation analysis of alpha-factor-arrested Saccharomyces cerevisiae.</title>
        <authorList>
            <person name="Li X."/>
            <person name="Gerber S.A."/>
            <person name="Rudner A.D."/>
            <person name="Beausoleil S.A."/>
            <person name="Haas W."/>
            <person name="Villen J."/>
            <person name="Elias J.E."/>
            <person name="Gygi S.P."/>
        </authorList>
    </citation>
    <scope>PHOSPHORYLATION [LARGE SCALE ANALYSIS] AT THR-129 AND SER-602</scope>
    <scope>IDENTIFICATION BY MASS SPECTROMETRY [LARGE SCALE ANALYSIS]</scope>
    <source>
        <strain>ADR376</strain>
    </source>
</reference>
<reference key="11">
    <citation type="journal article" date="2008" name="Mol. Cell. Proteomics">
        <title>A multidimensional chromatography technology for in-depth phosphoproteome analysis.</title>
        <authorList>
            <person name="Albuquerque C.P."/>
            <person name="Smolka M.B."/>
            <person name="Payne S.H."/>
            <person name="Bafna V."/>
            <person name="Eng J."/>
            <person name="Zhou H."/>
        </authorList>
    </citation>
    <scope>PHOSPHORYLATION [LARGE SCALE ANALYSIS] AT SER-96 AND SER-602</scope>
    <scope>IDENTIFICATION BY MASS SPECTROMETRY [LARGE SCALE ANALYSIS]</scope>
</reference>
<reference key="12">
    <citation type="journal article" date="2009" name="Science">
        <title>Global analysis of Cdk1 substrate phosphorylation sites provides insights into evolution.</title>
        <authorList>
            <person name="Holt L.J."/>
            <person name="Tuch B.B."/>
            <person name="Villen J."/>
            <person name="Johnson A.D."/>
            <person name="Gygi S.P."/>
            <person name="Morgan D.O."/>
        </authorList>
    </citation>
    <scope>PHOSPHORYLATION [LARGE SCALE ANALYSIS] AT SER-12; THR-311; SER-545 AND SER-602</scope>
    <scope>IDENTIFICATION BY MASS SPECTROMETRY [LARGE SCALE ANALYSIS]</scope>
</reference>
<sequence>MIAPDSQRLFGSFDEQFKDLKLDSVDTENNNTHGVSTILDSSPASVNNNTNGAVAASVNTVPGSTFRSNTPLLGGRHPLSRTSSLIDSIGIQRAASPFSSMKEPFIPQSSGVMSSSFWHGDHPESRVSTPVQQHPLLQRNESSSSFSYAANLGVNLSTHSLAVDITPLSTPTAAQSHVNLFPSSDIPPNMSMNGMSQLPAPVSVESSWRYIDTQGQIHGPFTTQMMSQWYIGGYFASTLQISRLGSTPETLGINDIFITLGELMTKLEKYDTDPFTTFDKLHVQTTSSDSINLNLAPYASGVAATGTIKATENDIFKPLTHDNIWDMDGGTTSKGVDIKLASATTISQTDESHKQEYKSTTMLEKGKKEKSESVAKALLDEQEKRNRELKRKEEARLSKKQKQKEDDLLKKQKEQKEQKEKEALEAEKQKKSEKTKKDTQTQTEGFKTSKDLPSLNSSSANPAPWASKVKVNNAIETSIKNGVSSTGKKKGEPLGLQQRNSKEEKQKEELKSVLNWANKSSLPSNQTIDIKSQFQKSPKGMKESSPLKELEDPNFIEEQKKLWEKVQSSSKQVKSTSSASTTTSSWTTVTSKGKAPIGTVVSPYSKTNTSLNSSLTAKTSTTSTTTTFASMNNVSPRQEFIKWCKSQMKLNSGITNNNVLELLLSLPTGPESKELIQETIYANSDVMDGRRFATEFIKRRVACEKQGDDPLSWNEALALSGNDDDGWEFQVVSKKKGRKH</sequence>
<comment type="function">
    <text>Suppressor of the MYO2 gene.</text>
</comment>
<comment type="subunit">
    <text evidence="6">Interacts with EAP1 and MSL5 (via the GYP domain).</text>
</comment>
<comment type="subcellular location">
    <subcellularLocation>
        <location evidence="4">Cytoplasm</location>
    </subcellularLocation>
</comment>
<comment type="miscellaneous">
    <text evidence="5">Present with 486 molecules/cell in log phase SD medium.</text>
</comment>
<comment type="similarity">
    <text evidence="7">Belongs to the SMY2/mpd2 family.</text>
</comment>
<comment type="sequence caution" evidence="7">
    <conflict type="erroneous initiation">
        <sequence resource="EMBL-CDS" id="AAA35057"/>
    </conflict>
</comment>
<comment type="sequence caution" evidence="7">
    <conflict type="erroneous initiation">
        <sequence resource="EMBL-CDS" id="CAA85133"/>
    </conflict>
</comment>
<gene>
    <name type="primary">SMY2</name>
    <name type="ordered locus">YBR172C</name>
    <name type="ORF">YBR1233</name>
</gene>
<name>SMY2_YEAST</name>
<proteinExistence type="evidence at protein level"/>
<protein>
    <recommendedName>
        <fullName>Protein SMY2</fullName>
    </recommendedName>
    <alternativeName>
        <fullName>Suppressor of MYO2-66 protein</fullName>
    </alternativeName>
</protein>